<comment type="function">
    <text evidence="1">The key enzymatic reactions in nitrogen fixation are catalyzed by the nitrogenase complex, which has 2 components: the iron protein and the molybdenum-iron protein.</text>
</comment>
<comment type="catalytic activity">
    <reaction>
        <text>N2 + 8 reduced [2Fe-2S]-[ferredoxin] + 16 ATP + 16 H2O = H2 + 8 oxidized [2Fe-2S]-[ferredoxin] + 2 NH4(+) + 16 ADP + 16 phosphate + 6 H(+)</text>
        <dbReference type="Rhea" id="RHEA:21448"/>
        <dbReference type="Rhea" id="RHEA-COMP:10000"/>
        <dbReference type="Rhea" id="RHEA-COMP:10001"/>
        <dbReference type="ChEBI" id="CHEBI:15377"/>
        <dbReference type="ChEBI" id="CHEBI:15378"/>
        <dbReference type="ChEBI" id="CHEBI:17997"/>
        <dbReference type="ChEBI" id="CHEBI:18276"/>
        <dbReference type="ChEBI" id="CHEBI:28938"/>
        <dbReference type="ChEBI" id="CHEBI:30616"/>
        <dbReference type="ChEBI" id="CHEBI:33737"/>
        <dbReference type="ChEBI" id="CHEBI:33738"/>
        <dbReference type="ChEBI" id="CHEBI:43474"/>
        <dbReference type="ChEBI" id="CHEBI:456216"/>
        <dbReference type="EC" id="1.18.6.1"/>
    </reaction>
</comment>
<comment type="cofactor">
    <cofactor evidence="1">
        <name>[4Fe-4S] cluster</name>
        <dbReference type="ChEBI" id="CHEBI:49883"/>
    </cofactor>
    <text evidence="1">Binds 1 [4Fe-4S] cluster per dimer.</text>
</comment>
<comment type="subunit">
    <text evidence="1">Homodimer.</text>
</comment>
<comment type="PTM">
    <text evidence="1">The reversible ADP-ribosylation of Arg-109 inactivates the nitrogenase reductase and regulates nitrogenase activity.</text>
</comment>
<comment type="similarity">
    <text evidence="3">Belongs to the NifH/BchL/ChlL family.</text>
</comment>
<dbReference type="EC" id="1.18.6.1"/>
<dbReference type="EMBL" id="X07500">
    <property type="protein sequence ID" value="CAA30381.1"/>
    <property type="molecule type" value="Genomic_DNA"/>
</dbReference>
<dbReference type="PIR" id="S00738">
    <property type="entry name" value="S00738"/>
</dbReference>
<dbReference type="SMR" id="P08625"/>
<dbReference type="GO" id="GO:0051539">
    <property type="term" value="F:4 iron, 4 sulfur cluster binding"/>
    <property type="evidence" value="ECO:0007669"/>
    <property type="project" value="UniProtKB-KW"/>
</dbReference>
<dbReference type="GO" id="GO:0005524">
    <property type="term" value="F:ATP binding"/>
    <property type="evidence" value="ECO:0007669"/>
    <property type="project" value="UniProtKB-UniRule"/>
</dbReference>
<dbReference type="GO" id="GO:0046872">
    <property type="term" value="F:metal ion binding"/>
    <property type="evidence" value="ECO:0007669"/>
    <property type="project" value="UniProtKB-KW"/>
</dbReference>
<dbReference type="GO" id="GO:0016163">
    <property type="term" value="F:nitrogenase activity"/>
    <property type="evidence" value="ECO:0007669"/>
    <property type="project" value="UniProtKB-UniRule"/>
</dbReference>
<dbReference type="GO" id="GO:0009399">
    <property type="term" value="P:nitrogen fixation"/>
    <property type="evidence" value="ECO:0007669"/>
    <property type="project" value="UniProtKB-UniRule"/>
</dbReference>
<dbReference type="CDD" id="cd02040">
    <property type="entry name" value="NifH"/>
    <property type="match status" value="1"/>
</dbReference>
<dbReference type="Gene3D" id="3.40.50.300">
    <property type="entry name" value="P-loop containing nucleotide triphosphate hydrolases"/>
    <property type="match status" value="1"/>
</dbReference>
<dbReference type="HAMAP" id="MF_00533">
    <property type="entry name" value="NifH"/>
    <property type="match status" value="1"/>
</dbReference>
<dbReference type="InterPro" id="IPR030655">
    <property type="entry name" value="NifH/chlL_CS"/>
</dbReference>
<dbReference type="InterPro" id="IPR000392">
    <property type="entry name" value="NifH/frxC"/>
</dbReference>
<dbReference type="InterPro" id="IPR005977">
    <property type="entry name" value="Nitrogenase_Fe_NifH"/>
</dbReference>
<dbReference type="InterPro" id="IPR027417">
    <property type="entry name" value="P-loop_NTPase"/>
</dbReference>
<dbReference type="NCBIfam" id="TIGR01287">
    <property type="entry name" value="nifH"/>
    <property type="match status" value="1"/>
</dbReference>
<dbReference type="NCBIfam" id="NF009701">
    <property type="entry name" value="PRK13230.1"/>
    <property type="match status" value="1"/>
</dbReference>
<dbReference type="PANTHER" id="PTHR42864">
    <property type="entry name" value="LIGHT-INDEPENDENT PROTOCHLOROPHYLLIDE REDUCTASE IRON-SULFUR ATP-BINDING PROTEIN"/>
    <property type="match status" value="1"/>
</dbReference>
<dbReference type="PANTHER" id="PTHR42864:SF2">
    <property type="entry name" value="LIGHT-INDEPENDENT PROTOCHLOROPHYLLIDE REDUCTASE IRON-SULFUR ATP-BINDING PROTEIN"/>
    <property type="match status" value="1"/>
</dbReference>
<dbReference type="Pfam" id="PF00142">
    <property type="entry name" value="Fer4_NifH"/>
    <property type="match status" value="1"/>
</dbReference>
<dbReference type="PIRSF" id="PIRSF000363">
    <property type="entry name" value="Nitrogenase_iron"/>
    <property type="match status" value="1"/>
</dbReference>
<dbReference type="PRINTS" id="PR00091">
    <property type="entry name" value="NITROGNASEII"/>
</dbReference>
<dbReference type="SUPFAM" id="SSF52540">
    <property type="entry name" value="P-loop containing nucleoside triphosphate hydrolases"/>
    <property type="match status" value="1"/>
</dbReference>
<dbReference type="PROSITE" id="PS00746">
    <property type="entry name" value="NIFH_FRXC_1"/>
    <property type="match status" value="1"/>
</dbReference>
<dbReference type="PROSITE" id="PS00692">
    <property type="entry name" value="NIFH_FRXC_2"/>
    <property type="match status" value="1"/>
</dbReference>
<dbReference type="PROSITE" id="PS51026">
    <property type="entry name" value="NIFH_FRXC_3"/>
    <property type="match status" value="1"/>
</dbReference>
<accession>P08625</accession>
<reference key="1">
    <citation type="journal article" date="1988" name="J. Mol. Evol.">
        <title>Nucleotide sequence of regions homologous to nifH (nitrogenase Fe protein) from the nitrogen-fixing archaebacteria Methanococcus thermolithotrophicus and Methanobacterium ivanovii: evolutionary implications.</title>
        <authorList>
            <person name="Souillard N."/>
            <person name="Magot M."/>
            <person name="Possot O."/>
            <person name="Sibold L."/>
        </authorList>
    </citation>
    <scope>NUCLEOTIDE SEQUENCE [GENOMIC DNA]</scope>
</reference>
<organism>
    <name type="scientific">Methanothermococcus thermolithotrophicus</name>
    <name type="common">Methanococcus thermolithotrophicus</name>
    <dbReference type="NCBI Taxonomy" id="2186"/>
    <lineage>
        <taxon>Archaea</taxon>
        <taxon>Methanobacteriati</taxon>
        <taxon>Methanobacteriota</taxon>
        <taxon>Methanomada group</taxon>
        <taxon>Methanococci</taxon>
        <taxon>Methanococcales</taxon>
        <taxon>Methanococcaceae</taxon>
        <taxon>Methanothermococcus</taxon>
    </lineage>
</organism>
<evidence type="ECO:0000250" key="1"/>
<evidence type="ECO:0000255" key="2"/>
<evidence type="ECO:0000305" key="3"/>
<protein>
    <recommendedName>
        <fullName>Nitrogenase iron protein 2</fullName>
        <ecNumber>1.18.6.1</ecNumber>
    </recommendedName>
    <alternativeName>
        <fullName>Nitrogenase Fe protein 2</fullName>
    </alternativeName>
    <alternativeName>
        <fullName>Nitrogenase component II</fullName>
    </alternativeName>
    <alternativeName>
        <fullName>Nitrogenase reductase</fullName>
    </alternativeName>
</protein>
<name>NIFH2_METTL</name>
<keyword id="KW-0004">4Fe-4S</keyword>
<keyword id="KW-0013">ADP-ribosylation</keyword>
<keyword id="KW-0067">ATP-binding</keyword>
<keyword id="KW-0408">Iron</keyword>
<keyword id="KW-0411">Iron-sulfur</keyword>
<keyword id="KW-0479">Metal-binding</keyword>
<keyword id="KW-0535">Nitrogen fixation</keyword>
<keyword id="KW-0547">Nucleotide-binding</keyword>
<keyword id="KW-0560">Oxidoreductase</keyword>
<gene>
    <name type="primary">nifH2</name>
</gene>
<feature type="chain" id="PRO_0000139545" description="Nitrogenase iron protein 2">
    <location>
        <begin position="1"/>
        <end position="292"/>
    </location>
</feature>
<feature type="binding site" evidence="2">
    <location>
        <begin position="8"/>
        <end position="15"/>
    </location>
    <ligand>
        <name>ATP</name>
        <dbReference type="ChEBI" id="CHEBI:30616"/>
    </ligand>
</feature>
<feature type="binding site" evidence="1">
    <location>
        <position position="106"/>
    </location>
    <ligand>
        <name>[4Fe-4S] cluster</name>
        <dbReference type="ChEBI" id="CHEBI:49883"/>
        <note>ligand shared between dimeric partners</note>
    </ligand>
</feature>
<feature type="binding site" evidence="1">
    <location>
        <position position="142"/>
    </location>
    <ligand>
        <name>[4Fe-4S] cluster</name>
        <dbReference type="ChEBI" id="CHEBI:49883"/>
        <note>ligand shared between dimeric partners</note>
    </ligand>
</feature>
<feature type="modified residue" description="ADP-ribosylarginine; by dinitrogenase reductase ADP-ribosyltransferase" evidence="1">
    <location>
        <position position="109"/>
    </location>
</feature>
<proteinExistence type="inferred from homology"/>
<sequence length="292" mass="32080">MKQIAFYGKGGIGKSTTVCNIAAALADQGKKVMVVGCDPKHDCTSNLRGGQEIPTVLDILREKGLDKLGLETIIEKEMIEINDIIYEGYNGIYCVEAGGPKPGYGCAGRGVIVVIDLLKKMNLYKDLKLDIVLYDVLGDVVCGGFAMPLRMGLAEQIYVVTSSDYMAIYAANNICRGISEFVKRGGSKLGGLIYNVRGSMDAYDIINEFADKLGANIVGKVPNSHLIPEAEIEGKTVIEYDPNDEISQVYRELAKKIYENNEGTIPKPLENIEIMTIGKKIKERLKKERMKN</sequence>